<name>PSBN_COLOB</name>
<gene>
    <name evidence="1" type="primary">psbN</name>
</gene>
<accession>Q71KQ8</accession>
<protein>
    <recommendedName>
        <fullName evidence="1">Protein PsbN</fullName>
    </recommendedName>
</protein>
<comment type="function">
    <text evidence="1">May play a role in photosystem I and II biogenesis.</text>
</comment>
<comment type="subcellular location">
    <subcellularLocation>
        <location evidence="1">Plastid</location>
        <location evidence="1">Chloroplast thylakoid membrane</location>
        <topology evidence="1">Single-pass membrane protein</topology>
    </subcellularLocation>
</comment>
<comment type="similarity">
    <text evidence="1">Belongs to the PsbN family.</text>
</comment>
<comment type="caution">
    <text evidence="1">Originally thought to be a component of PSII; based on experiments in Synechocystis, N.tabacum and barley, and its absence from PSII in T.elongatus and T.vulcanus, this is probably not true.</text>
</comment>
<reference key="1">
    <citation type="submission" date="2002-02" db="EMBL/GenBank/DDBJ databases">
        <title>psbB gene cluster of Charophyceae.</title>
        <authorList>
            <person name="Lee J."/>
            <person name="Manhart J.R."/>
        </authorList>
    </citation>
    <scope>NUCLEOTIDE SEQUENCE [GENOMIC DNA]</scope>
</reference>
<keyword id="KW-0150">Chloroplast</keyword>
<keyword id="KW-0472">Membrane</keyword>
<keyword id="KW-0934">Plastid</keyword>
<keyword id="KW-0793">Thylakoid</keyword>
<keyword id="KW-0812">Transmembrane</keyword>
<keyword id="KW-1133">Transmembrane helix</keyword>
<feature type="chain" id="PRO_0000207887" description="Protein PsbN">
    <location>
        <begin position="1"/>
        <end position="43"/>
    </location>
</feature>
<feature type="transmembrane region" description="Helical" evidence="1">
    <location>
        <begin position="4"/>
        <end position="24"/>
    </location>
</feature>
<organism>
    <name type="scientific">Coleochaete orbicularis</name>
    <name type="common">Charophycean green alga</name>
    <dbReference type="NCBI Taxonomy" id="3124"/>
    <lineage>
        <taxon>Eukaryota</taxon>
        <taxon>Viridiplantae</taxon>
        <taxon>Streptophyta</taxon>
        <taxon>Coleochaetophyceae</taxon>
        <taxon>Coleochaetales</taxon>
        <taxon>Coleochaetaceae</taxon>
        <taxon>Coleochaete</taxon>
    </lineage>
</organism>
<sequence>METGILIVIFISCLLVSFTGYAVYTAFGQPSKKLRDPFEEHED</sequence>
<geneLocation type="chloroplast"/>
<evidence type="ECO:0000255" key="1">
    <source>
        <dbReference type="HAMAP-Rule" id="MF_00293"/>
    </source>
</evidence>
<dbReference type="EMBL" id="AF482495">
    <property type="protein sequence ID" value="AAQ05898.1"/>
    <property type="molecule type" value="Genomic_DNA"/>
</dbReference>
<dbReference type="SMR" id="Q71KQ8"/>
<dbReference type="GO" id="GO:0009535">
    <property type="term" value="C:chloroplast thylakoid membrane"/>
    <property type="evidence" value="ECO:0007669"/>
    <property type="project" value="UniProtKB-SubCell"/>
</dbReference>
<dbReference type="GO" id="GO:0015979">
    <property type="term" value="P:photosynthesis"/>
    <property type="evidence" value="ECO:0007669"/>
    <property type="project" value="InterPro"/>
</dbReference>
<dbReference type="HAMAP" id="MF_00293">
    <property type="entry name" value="PSII_PsbN"/>
    <property type="match status" value="1"/>
</dbReference>
<dbReference type="InterPro" id="IPR003398">
    <property type="entry name" value="PSII_PsbN"/>
</dbReference>
<dbReference type="PANTHER" id="PTHR35326">
    <property type="entry name" value="PROTEIN PSBN"/>
    <property type="match status" value="1"/>
</dbReference>
<dbReference type="PANTHER" id="PTHR35326:SF3">
    <property type="entry name" value="PROTEIN PSBN"/>
    <property type="match status" value="1"/>
</dbReference>
<dbReference type="Pfam" id="PF02468">
    <property type="entry name" value="PsbN"/>
    <property type="match status" value="1"/>
</dbReference>
<proteinExistence type="inferred from homology"/>